<evidence type="ECO:0000255" key="1">
    <source>
        <dbReference type="HAMAP-Rule" id="MF_01306"/>
    </source>
</evidence>
<evidence type="ECO:0000305" key="2"/>
<keyword id="KW-0687">Ribonucleoprotein</keyword>
<keyword id="KW-0689">Ribosomal protein</keyword>
<keyword id="KW-0694">RNA-binding</keyword>
<keyword id="KW-0699">rRNA-binding</keyword>
<name>RS4_SOLUE</name>
<proteinExistence type="inferred from homology"/>
<dbReference type="EMBL" id="CP000473">
    <property type="protein sequence ID" value="ABJ86046.1"/>
    <property type="molecule type" value="Genomic_DNA"/>
</dbReference>
<dbReference type="SMR" id="Q01WB9"/>
<dbReference type="FunCoup" id="Q01WB9">
    <property type="interactions" value="762"/>
</dbReference>
<dbReference type="STRING" id="234267.Acid_5091"/>
<dbReference type="KEGG" id="sus:Acid_5091"/>
<dbReference type="eggNOG" id="COG0522">
    <property type="taxonomic scope" value="Bacteria"/>
</dbReference>
<dbReference type="HOGENOM" id="CLU_092403_0_2_0"/>
<dbReference type="InParanoid" id="Q01WB9"/>
<dbReference type="OrthoDB" id="9803672at2"/>
<dbReference type="GO" id="GO:0015935">
    <property type="term" value="C:small ribosomal subunit"/>
    <property type="evidence" value="ECO:0007669"/>
    <property type="project" value="InterPro"/>
</dbReference>
<dbReference type="GO" id="GO:0019843">
    <property type="term" value="F:rRNA binding"/>
    <property type="evidence" value="ECO:0007669"/>
    <property type="project" value="UniProtKB-UniRule"/>
</dbReference>
<dbReference type="GO" id="GO:0003735">
    <property type="term" value="F:structural constituent of ribosome"/>
    <property type="evidence" value="ECO:0007669"/>
    <property type="project" value="InterPro"/>
</dbReference>
<dbReference type="GO" id="GO:0042274">
    <property type="term" value="P:ribosomal small subunit biogenesis"/>
    <property type="evidence" value="ECO:0007669"/>
    <property type="project" value="TreeGrafter"/>
</dbReference>
<dbReference type="GO" id="GO:0006412">
    <property type="term" value="P:translation"/>
    <property type="evidence" value="ECO:0007669"/>
    <property type="project" value="UniProtKB-UniRule"/>
</dbReference>
<dbReference type="CDD" id="cd00165">
    <property type="entry name" value="S4"/>
    <property type="match status" value="1"/>
</dbReference>
<dbReference type="FunFam" id="1.10.1050.10:FF:000001">
    <property type="entry name" value="30S ribosomal protein S4"/>
    <property type="match status" value="1"/>
</dbReference>
<dbReference type="FunFam" id="3.10.290.10:FF:000001">
    <property type="entry name" value="30S ribosomal protein S4"/>
    <property type="match status" value="1"/>
</dbReference>
<dbReference type="Gene3D" id="1.10.1050.10">
    <property type="entry name" value="Ribosomal Protein S4 Delta 41, Chain A, domain 1"/>
    <property type="match status" value="1"/>
</dbReference>
<dbReference type="Gene3D" id="3.10.290.10">
    <property type="entry name" value="RNA-binding S4 domain"/>
    <property type="match status" value="1"/>
</dbReference>
<dbReference type="HAMAP" id="MF_01306_B">
    <property type="entry name" value="Ribosomal_uS4_B"/>
    <property type="match status" value="1"/>
</dbReference>
<dbReference type="InterPro" id="IPR022801">
    <property type="entry name" value="Ribosomal_uS4"/>
</dbReference>
<dbReference type="InterPro" id="IPR005709">
    <property type="entry name" value="Ribosomal_uS4_bac-type"/>
</dbReference>
<dbReference type="InterPro" id="IPR018079">
    <property type="entry name" value="Ribosomal_uS4_CS"/>
</dbReference>
<dbReference type="InterPro" id="IPR001912">
    <property type="entry name" value="Ribosomal_uS4_N"/>
</dbReference>
<dbReference type="InterPro" id="IPR002942">
    <property type="entry name" value="S4_RNA-bd"/>
</dbReference>
<dbReference type="InterPro" id="IPR036986">
    <property type="entry name" value="S4_RNA-bd_sf"/>
</dbReference>
<dbReference type="NCBIfam" id="NF003717">
    <property type="entry name" value="PRK05327.1"/>
    <property type="match status" value="1"/>
</dbReference>
<dbReference type="NCBIfam" id="TIGR01017">
    <property type="entry name" value="rpsD_bact"/>
    <property type="match status" value="1"/>
</dbReference>
<dbReference type="PANTHER" id="PTHR11831">
    <property type="entry name" value="30S 40S RIBOSOMAL PROTEIN"/>
    <property type="match status" value="1"/>
</dbReference>
<dbReference type="PANTHER" id="PTHR11831:SF4">
    <property type="entry name" value="SMALL RIBOSOMAL SUBUNIT PROTEIN US4M"/>
    <property type="match status" value="1"/>
</dbReference>
<dbReference type="Pfam" id="PF00163">
    <property type="entry name" value="Ribosomal_S4"/>
    <property type="match status" value="1"/>
</dbReference>
<dbReference type="Pfam" id="PF01479">
    <property type="entry name" value="S4"/>
    <property type="match status" value="1"/>
</dbReference>
<dbReference type="SMART" id="SM01390">
    <property type="entry name" value="Ribosomal_S4"/>
    <property type="match status" value="1"/>
</dbReference>
<dbReference type="SMART" id="SM00363">
    <property type="entry name" value="S4"/>
    <property type="match status" value="1"/>
</dbReference>
<dbReference type="SUPFAM" id="SSF55174">
    <property type="entry name" value="Alpha-L RNA-binding motif"/>
    <property type="match status" value="1"/>
</dbReference>
<dbReference type="PROSITE" id="PS00632">
    <property type="entry name" value="RIBOSOMAL_S4"/>
    <property type="match status" value="1"/>
</dbReference>
<dbReference type="PROSITE" id="PS50889">
    <property type="entry name" value="S4"/>
    <property type="match status" value="1"/>
</dbReference>
<feature type="chain" id="PRO_0000293373" description="Small ribosomal subunit protein uS4">
    <location>
        <begin position="1"/>
        <end position="210"/>
    </location>
</feature>
<feature type="domain" description="S4 RNA-binding" evidence="1">
    <location>
        <begin position="99"/>
        <end position="161"/>
    </location>
</feature>
<protein>
    <recommendedName>
        <fullName evidence="1">Small ribosomal subunit protein uS4</fullName>
    </recommendedName>
    <alternativeName>
        <fullName evidence="2">30S ribosomal protein S4</fullName>
    </alternativeName>
</protein>
<accession>Q01WB9</accession>
<organism>
    <name type="scientific">Solibacter usitatus (strain Ellin6076)</name>
    <dbReference type="NCBI Taxonomy" id="234267"/>
    <lineage>
        <taxon>Bacteria</taxon>
        <taxon>Pseudomonadati</taxon>
        <taxon>Acidobacteriota</taxon>
        <taxon>Terriglobia</taxon>
        <taxon>Bryobacterales</taxon>
        <taxon>Solibacteraceae</taxon>
        <taxon>Candidatus Solibacter</taxon>
    </lineage>
</organism>
<reference key="1">
    <citation type="journal article" date="2009" name="Appl. Environ. Microbiol.">
        <title>Three genomes from the phylum Acidobacteria provide insight into the lifestyles of these microorganisms in soils.</title>
        <authorList>
            <person name="Ward N.L."/>
            <person name="Challacombe J.F."/>
            <person name="Janssen P.H."/>
            <person name="Henrissat B."/>
            <person name="Coutinho P.M."/>
            <person name="Wu M."/>
            <person name="Xie G."/>
            <person name="Haft D.H."/>
            <person name="Sait M."/>
            <person name="Badger J."/>
            <person name="Barabote R.D."/>
            <person name="Bradley B."/>
            <person name="Brettin T.S."/>
            <person name="Brinkac L.M."/>
            <person name="Bruce D."/>
            <person name="Creasy T."/>
            <person name="Daugherty S.C."/>
            <person name="Davidsen T.M."/>
            <person name="DeBoy R.T."/>
            <person name="Detter J.C."/>
            <person name="Dodson R.J."/>
            <person name="Durkin A.S."/>
            <person name="Ganapathy A."/>
            <person name="Gwinn-Giglio M."/>
            <person name="Han C.S."/>
            <person name="Khouri H."/>
            <person name="Kiss H."/>
            <person name="Kothari S.P."/>
            <person name="Madupu R."/>
            <person name="Nelson K.E."/>
            <person name="Nelson W.C."/>
            <person name="Paulsen I."/>
            <person name="Penn K."/>
            <person name="Ren Q."/>
            <person name="Rosovitz M.J."/>
            <person name="Selengut J.D."/>
            <person name="Shrivastava S."/>
            <person name="Sullivan S.A."/>
            <person name="Tapia R."/>
            <person name="Thompson L.S."/>
            <person name="Watkins K.L."/>
            <person name="Yang Q."/>
            <person name="Yu C."/>
            <person name="Zafar N."/>
            <person name="Zhou L."/>
            <person name="Kuske C.R."/>
        </authorList>
    </citation>
    <scope>NUCLEOTIDE SEQUENCE [LARGE SCALE GENOMIC DNA]</scope>
    <source>
        <strain>Ellin6076</strain>
    </source>
</reference>
<comment type="function">
    <text evidence="1">One of the primary rRNA binding proteins, it binds directly to 16S rRNA where it nucleates assembly of the body of the 30S subunit.</text>
</comment>
<comment type="function">
    <text evidence="1">With S5 and S12 plays an important role in translational accuracy.</text>
</comment>
<comment type="subunit">
    <text evidence="1">Part of the 30S ribosomal subunit. Contacts protein S5. The interaction surface between S4 and S5 is involved in control of translational fidelity.</text>
</comment>
<comment type="similarity">
    <text evidence="1">Belongs to the universal ribosomal protein uS4 family.</text>
</comment>
<gene>
    <name evidence="1" type="primary">rpsD</name>
    <name type="ordered locus">Acid_5091</name>
</gene>
<sequence>MARYIGPVCRQCRREGMKLYLKGERCHSEKCAIEKRNFIPGQHGKDRAKKIVGYGLQLREKQKVRRVYGVLERQFRNAFEKAALQKGITGENLMQNLERRLDSVIYRMGFGTSRAQARQVVRHGHINVNGRKCNIPSALINVGDEITVRETSKNNATILSARDATAHAPAPNWIEVDREGLKGRVQSLPKREDLVQIQLNEQLIVELYSK</sequence>